<dbReference type="EMBL" id="CP000526">
    <property type="protein sequence ID" value="ABM51736.1"/>
    <property type="molecule type" value="Genomic_DNA"/>
</dbReference>
<dbReference type="RefSeq" id="WP_004185395.1">
    <property type="nucleotide sequence ID" value="NC_008785.1"/>
</dbReference>
<dbReference type="SMR" id="A1V6U2"/>
<dbReference type="GeneID" id="95550920"/>
<dbReference type="KEGG" id="bmv:BMASAVP1_A2648"/>
<dbReference type="HOGENOM" id="CLU_190949_1_1_4"/>
<dbReference type="GO" id="GO:0022625">
    <property type="term" value="C:cytosolic large ribosomal subunit"/>
    <property type="evidence" value="ECO:0007669"/>
    <property type="project" value="TreeGrafter"/>
</dbReference>
<dbReference type="GO" id="GO:0003735">
    <property type="term" value="F:structural constituent of ribosome"/>
    <property type="evidence" value="ECO:0007669"/>
    <property type="project" value="InterPro"/>
</dbReference>
<dbReference type="GO" id="GO:0006412">
    <property type="term" value="P:translation"/>
    <property type="evidence" value="ECO:0007669"/>
    <property type="project" value="UniProtKB-UniRule"/>
</dbReference>
<dbReference type="FunFam" id="2.20.28.120:FF:000001">
    <property type="entry name" value="50S ribosomal protein L33"/>
    <property type="match status" value="1"/>
</dbReference>
<dbReference type="Gene3D" id="2.20.28.120">
    <property type="entry name" value="Ribosomal protein L33"/>
    <property type="match status" value="1"/>
</dbReference>
<dbReference type="HAMAP" id="MF_00294">
    <property type="entry name" value="Ribosomal_bL33"/>
    <property type="match status" value="1"/>
</dbReference>
<dbReference type="InterPro" id="IPR001705">
    <property type="entry name" value="Ribosomal_bL33"/>
</dbReference>
<dbReference type="InterPro" id="IPR018264">
    <property type="entry name" value="Ribosomal_bL33_CS"/>
</dbReference>
<dbReference type="InterPro" id="IPR038584">
    <property type="entry name" value="Ribosomal_bL33_sf"/>
</dbReference>
<dbReference type="InterPro" id="IPR011332">
    <property type="entry name" value="Ribosomal_zn-bd"/>
</dbReference>
<dbReference type="NCBIfam" id="NF001860">
    <property type="entry name" value="PRK00595.1"/>
    <property type="match status" value="1"/>
</dbReference>
<dbReference type="NCBIfam" id="TIGR01023">
    <property type="entry name" value="rpmG_bact"/>
    <property type="match status" value="1"/>
</dbReference>
<dbReference type="PANTHER" id="PTHR15238">
    <property type="entry name" value="54S RIBOSOMAL PROTEIN L39, MITOCHONDRIAL"/>
    <property type="match status" value="1"/>
</dbReference>
<dbReference type="PANTHER" id="PTHR15238:SF1">
    <property type="entry name" value="LARGE RIBOSOMAL SUBUNIT PROTEIN BL33M"/>
    <property type="match status" value="1"/>
</dbReference>
<dbReference type="Pfam" id="PF00471">
    <property type="entry name" value="Ribosomal_L33"/>
    <property type="match status" value="1"/>
</dbReference>
<dbReference type="SUPFAM" id="SSF57829">
    <property type="entry name" value="Zn-binding ribosomal proteins"/>
    <property type="match status" value="1"/>
</dbReference>
<dbReference type="PROSITE" id="PS00582">
    <property type="entry name" value="RIBOSOMAL_L33"/>
    <property type="match status" value="1"/>
</dbReference>
<proteinExistence type="inferred from homology"/>
<feature type="chain" id="PRO_1000115111" description="Large ribosomal subunit protein bL33">
    <location>
        <begin position="1"/>
        <end position="55"/>
    </location>
</feature>
<feature type="region of interest" description="Disordered" evidence="2">
    <location>
        <begin position="1"/>
        <end position="24"/>
    </location>
</feature>
<feature type="compositionally biased region" description="Basic and acidic residues" evidence="2">
    <location>
        <begin position="1"/>
        <end position="11"/>
    </location>
</feature>
<feature type="compositionally biased region" description="Polar residues" evidence="2">
    <location>
        <begin position="14"/>
        <end position="24"/>
    </location>
</feature>
<name>RL33_BURMS</name>
<accession>A1V6U2</accession>
<evidence type="ECO:0000255" key="1">
    <source>
        <dbReference type="HAMAP-Rule" id="MF_00294"/>
    </source>
</evidence>
<evidence type="ECO:0000256" key="2">
    <source>
        <dbReference type="SAM" id="MobiDB-lite"/>
    </source>
</evidence>
<evidence type="ECO:0000305" key="3"/>
<gene>
    <name evidence="1" type="primary">rpmG</name>
    <name type="ordered locus">BMASAVP1_A2648</name>
</gene>
<organism>
    <name type="scientific">Burkholderia mallei (strain SAVP1)</name>
    <dbReference type="NCBI Taxonomy" id="320388"/>
    <lineage>
        <taxon>Bacteria</taxon>
        <taxon>Pseudomonadati</taxon>
        <taxon>Pseudomonadota</taxon>
        <taxon>Betaproteobacteria</taxon>
        <taxon>Burkholderiales</taxon>
        <taxon>Burkholderiaceae</taxon>
        <taxon>Burkholderia</taxon>
        <taxon>pseudomallei group</taxon>
    </lineage>
</organism>
<comment type="similarity">
    <text evidence="1">Belongs to the bacterial ribosomal protein bL33 family.</text>
</comment>
<keyword id="KW-0687">Ribonucleoprotein</keyword>
<keyword id="KW-0689">Ribosomal protein</keyword>
<protein>
    <recommendedName>
        <fullName evidence="1">Large ribosomal subunit protein bL33</fullName>
    </recommendedName>
    <alternativeName>
        <fullName evidence="3">50S ribosomal protein L33</fullName>
    </alternativeName>
</protein>
<reference key="1">
    <citation type="journal article" date="2010" name="Genome Biol. Evol.">
        <title>Continuing evolution of Burkholderia mallei through genome reduction and large-scale rearrangements.</title>
        <authorList>
            <person name="Losada L."/>
            <person name="Ronning C.M."/>
            <person name="DeShazer D."/>
            <person name="Woods D."/>
            <person name="Fedorova N."/>
            <person name="Kim H.S."/>
            <person name="Shabalina S.A."/>
            <person name="Pearson T.R."/>
            <person name="Brinkac L."/>
            <person name="Tan P."/>
            <person name="Nandi T."/>
            <person name="Crabtree J."/>
            <person name="Badger J."/>
            <person name="Beckstrom-Sternberg S."/>
            <person name="Saqib M."/>
            <person name="Schutzer S.E."/>
            <person name="Keim P."/>
            <person name="Nierman W.C."/>
        </authorList>
    </citation>
    <scope>NUCLEOTIDE SEQUENCE [LARGE SCALE GENOMIC DNA]</scope>
    <source>
        <strain>SAVP1</strain>
    </source>
</reference>
<sequence length="55" mass="6356">MAKGARDKIKLESTAGTGHFYTTTKNKRNMPEKMEIMKFDPVARKHVAYKETKIK</sequence>